<comment type="function">
    <text evidence="1">Required for regulated cell division, cell wall synthesis and the maintenance of cell shape.</text>
</comment>
<comment type="subcellular location">
    <subcellularLocation>
        <location evidence="1">Cell membrane</location>
        <topology evidence="1">Single-pass membrane protein</topology>
    </subcellularLocation>
    <text evidence="1">Localizes to poles and midcell sites.</text>
</comment>
<comment type="similarity">
    <text evidence="1">Belongs to the CwsA family.</text>
</comment>
<proteinExistence type="inferred from homology"/>
<protein>
    <recommendedName>
        <fullName evidence="1">Cell wall synthesis protein CwsA</fullName>
    </recommendedName>
    <alternativeName>
        <fullName evidence="1">Cell wall synthesis and cell shape protein A</fullName>
    </alternativeName>
</protein>
<keyword id="KW-0131">Cell cycle</keyword>
<keyword id="KW-0132">Cell division</keyword>
<keyword id="KW-1003">Cell membrane</keyword>
<keyword id="KW-0133">Cell shape</keyword>
<keyword id="KW-0472">Membrane</keyword>
<keyword id="KW-1185">Reference proteome</keyword>
<keyword id="KW-0812">Transmembrane</keyword>
<keyword id="KW-1133">Transmembrane helix</keyword>
<reference key="1">
    <citation type="journal article" date="2003" name="Proc. Natl. Acad. Sci. U.S.A.">
        <title>The complete genome sequence of Mycobacterium bovis.</title>
        <authorList>
            <person name="Garnier T."/>
            <person name="Eiglmeier K."/>
            <person name="Camus J.-C."/>
            <person name="Medina N."/>
            <person name="Mansoor H."/>
            <person name="Pryor M."/>
            <person name="Duthoy S."/>
            <person name="Grondin S."/>
            <person name="Lacroix C."/>
            <person name="Monsempe C."/>
            <person name="Simon S."/>
            <person name="Harris B."/>
            <person name="Atkin R."/>
            <person name="Doggett J."/>
            <person name="Mayes R."/>
            <person name="Keating L."/>
            <person name="Wheeler P.R."/>
            <person name="Parkhill J."/>
            <person name="Barrell B.G."/>
            <person name="Cole S.T."/>
            <person name="Gordon S.V."/>
            <person name="Hewinson R.G."/>
        </authorList>
    </citation>
    <scope>NUCLEOTIDE SEQUENCE [LARGE SCALE GENOMIC DNA]</scope>
    <source>
        <strain>ATCC BAA-935 / AF2122/97</strain>
    </source>
</reference>
<reference key="2">
    <citation type="journal article" date="2017" name="Genome Announc.">
        <title>Updated reference genome sequence and annotation of Mycobacterium bovis AF2122/97.</title>
        <authorList>
            <person name="Malone K.M."/>
            <person name="Farrell D."/>
            <person name="Stuber T.P."/>
            <person name="Schubert O.T."/>
            <person name="Aebersold R."/>
            <person name="Robbe-Austerman S."/>
            <person name="Gordon S.V."/>
        </authorList>
    </citation>
    <scope>NUCLEOTIDE SEQUENCE [LARGE SCALE GENOMIC DNA]</scope>
    <scope>GENOME REANNOTATION</scope>
    <source>
        <strain>ATCC BAA-935 / AF2122/97</strain>
    </source>
</reference>
<organism>
    <name type="scientific">Mycobacterium bovis (strain ATCC BAA-935 / AF2122/97)</name>
    <dbReference type="NCBI Taxonomy" id="233413"/>
    <lineage>
        <taxon>Bacteria</taxon>
        <taxon>Bacillati</taxon>
        <taxon>Actinomycetota</taxon>
        <taxon>Actinomycetes</taxon>
        <taxon>Mycobacteriales</taxon>
        <taxon>Mycobacteriaceae</taxon>
        <taxon>Mycobacterium</taxon>
        <taxon>Mycobacterium tuberculosis complex</taxon>
    </lineage>
</organism>
<evidence type="ECO:0000255" key="1">
    <source>
        <dbReference type="HAMAP-Rule" id="MF_00927"/>
    </source>
</evidence>
<accession>P59977</accession>
<accession>A0A1R3XV73</accession>
<accession>X2BDR6</accession>
<gene>
    <name evidence="1" type="primary">cwsA</name>
    <name type="ordered locus">BQ2027_MB0008C</name>
</gene>
<feature type="chain" id="PRO_0000103639" description="Cell wall synthesis protein CwsA">
    <location>
        <begin position="1"/>
        <end position="145"/>
    </location>
</feature>
<feature type="transmembrane region" description="Helical" evidence="1">
    <location>
        <begin position="104"/>
        <end position="124"/>
    </location>
</feature>
<name>CWSA_MYCBO</name>
<sequence length="145" mass="15681">MSEQVETRLTPRERLTRGLAYSAVGPVDVTRGLLELGVGLGLQSARSTAAGLRRRYREGRLAREVAAAQETLAQELTAAQDVVANLPQALQDARTQRRSKHHLWIFAGIAAAILAGGAVAFSIVRRSSRPEPSPRPPSVEVQPRP</sequence>
<dbReference type="EMBL" id="LT708304">
    <property type="protein sequence ID" value="SIT98350.1"/>
    <property type="molecule type" value="Genomic_DNA"/>
</dbReference>
<dbReference type="RefSeq" id="NP_853678.1">
    <property type="nucleotide sequence ID" value="NC_002945.3"/>
</dbReference>
<dbReference type="RefSeq" id="WP_003400307.1">
    <property type="nucleotide sequence ID" value="NC_002945.4"/>
</dbReference>
<dbReference type="BMRB" id="P59977"/>
<dbReference type="SMR" id="P59977"/>
<dbReference type="GeneID" id="45423967"/>
<dbReference type="KEGG" id="mbo:BQ2027_MB0008C"/>
<dbReference type="PATRIC" id="fig|233413.5.peg.11"/>
<dbReference type="Proteomes" id="UP000001419">
    <property type="component" value="Chromosome"/>
</dbReference>
<dbReference type="GO" id="GO:0005886">
    <property type="term" value="C:plasma membrane"/>
    <property type="evidence" value="ECO:0007669"/>
    <property type="project" value="UniProtKB-SubCell"/>
</dbReference>
<dbReference type="GO" id="GO:0051301">
    <property type="term" value="P:cell division"/>
    <property type="evidence" value="ECO:0007669"/>
    <property type="project" value="UniProtKB-UniRule"/>
</dbReference>
<dbReference type="GO" id="GO:0042546">
    <property type="term" value="P:cell wall biogenesis"/>
    <property type="evidence" value="ECO:0007669"/>
    <property type="project" value="UniProtKB-UniRule"/>
</dbReference>
<dbReference type="GO" id="GO:0008360">
    <property type="term" value="P:regulation of cell shape"/>
    <property type="evidence" value="ECO:0007669"/>
    <property type="project" value="UniProtKB-UniRule"/>
</dbReference>
<dbReference type="HAMAP" id="MF_00927">
    <property type="entry name" value="CwsA"/>
    <property type="match status" value="1"/>
</dbReference>
<dbReference type="InterPro" id="IPR024245">
    <property type="entry name" value="CwsA"/>
</dbReference>
<dbReference type="Pfam" id="PF10814">
    <property type="entry name" value="CwsA"/>
    <property type="match status" value="1"/>
</dbReference>